<feature type="chain" id="PRO_1000114729" description="Potassium-transporting ATPase KdpC subunit">
    <location>
        <begin position="1"/>
        <end position="201"/>
    </location>
</feature>
<feature type="transmembrane region" description="Helical" evidence="1">
    <location>
        <begin position="10"/>
        <end position="30"/>
    </location>
</feature>
<protein>
    <recommendedName>
        <fullName evidence="1">Potassium-transporting ATPase KdpC subunit</fullName>
    </recommendedName>
    <alternativeName>
        <fullName evidence="1">ATP phosphohydrolase [potassium-transporting] C chain</fullName>
    </alternativeName>
    <alternativeName>
        <fullName evidence="1">Potassium-binding and translocating subunit C</fullName>
    </alternativeName>
    <alternativeName>
        <fullName evidence="1">Potassium-translocating ATPase C chain</fullName>
    </alternativeName>
</protein>
<keyword id="KW-0067">ATP-binding</keyword>
<keyword id="KW-0997">Cell inner membrane</keyword>
<keyword id="KW-1003">Cell membrane</keyword>
<keyword id="KW-0406">Ion transport</keyword>
<keyword id="KW-0472">Membrane</keyword>
<keyword id="KW-0547">Nucleotide-binding</keyword>
<keyword id="KW-0630">Potassium</keyword>
<keyword id="KW-0633">Potassium transport</keyword>
<keyword id="KW-0812">Transmembrane</keyword>
<keyword id="KW-1133">Transmembrane helix</keyword>
<keyword id="KW-0813">Transport</keyword>
<reference key="1">
    <citation type="submission" date="2007-12" db="EMBL/GenBank/DDBJ databases">
        <title>Complete sequence of Methylobacterium extorquens PA1.</title>
        <authorList>
            <consortium name="US DOE Joint Genome Institute"/>
            <person name="Copeland A."/>
            <person name="Lucas S."/>
            <person name="Lapidus A."/>
            <person name="Barry K."/>
            <person name="Glavina del Rio T."/>
            <person name="Dalin E."/>
            <person name="Tice H."/>
            <person name="Pitluck S."/>
            <person name="Saunders E."/>
            <person name="Brettin T."/>
            <person name="Bruce D."/>
            <person name="Detter J.C."/>
            <person name="Han C."/>
            <person name="Schmutz J."/>
            <person name="Larimer F."/>
            <person name="Land M."/>
            <person name="Hauser L."/>
            <person name="Kyrpides N."/>
            <person name="Kim E."/>
            <person name="Marx C."/>
            <person name="Richardson P."/>
        </authorList>
    </citation>
    <scope>NUCLEOTIDE SEQUENCE [LARGE SCALE GENOMIC DNA]</scope>
    <source>
        <strain>PA1</strain>
    </source>
</reference>
<organism>
    <name type="scientific">Methylorubrum extorquens (strain PA1)</name>
    <name type="common">Methylobacterium extorquens</name>
    <dbReference type="NCBI Taxonomy" id="419610"/>
    <lineage>
        <taxon>Bacteria</taxon>
        <taxon>Pseudomonadati</taxon>
        <taxon>Pseudomonadota</taxon>
        <taxon>Alphaproteobacteria</taxon>
        <taxon>Hyphomicrobiales</taxon>
        <taxon>Methylobacteriaceae</taxon>
        <taxon>Methylorubrum</taxon>
    </lineage>
</organism>
<accession>A9VZA4</accession>
<sequence length="201" mass="20545">MLNQLRPALVLLVALTAVTGLAYPLAVTGIAGALFPAKAAGSLIERDGRIIGSSLIGQSFTGEGYFHGRPSATNAADPADASKTVPAPYNAASSAGSNLGPTSAALAERVKGDLAALKAENPGRPVPVDLVTTSGSGLDPDISPEAALFQVPRIARARNLPEARLRDLVAGQVQGRTLGLLGEPRVNVLALNLVLDDLAKR</sequence>
<dbReference type="EMBL" id="CP000908">
    <property type="protein sequence ID" value="ABY28660.1"/>
    <property type="molecule type" value="Genomic_DNA"/>
</dbReference>
<dbReference type="RefSeq" id="WP_012252048.1">
    <property type="nucleotide sequence ID" value="NC_010172.1"/>
</dbReference>
<dbReference type="SMR" id="A9VZA4"/>
<dbReference type="KEGG" id="mex:Mext_0235"/>
<dbReference type="eggNOG" id="COG2156">
    <property type="taxonomic scope" value="Bacteria"/>
</dbReference>
<dbReference type="HOGENOM" id="CLU_077094_2_0_5"/>
<dbReference type="BioCyc" id="MEXT419610:MEXT_RS01135-MONOMER"/>
<dbReference type="GO" id="GO:0005886">
    <property type="term" value="C:plasma membrane"/>
    <property type="evidence" value="ECO:0007669"/>
    <property type="project" value="UniProtKB-SubCell"/>
</dbReference>
<dbReference type="GO" id="GO:0005524">
    <property type="term" value="F:ATP binding"/>
    <property type="evidence" value="ECO:0007669"/>
    <property type="project" value="UniProtKB-UniRule"/>
</dbReference>
<dbReference type="GO" id="GO:0008556">
    <property type="term" value="F:P-type potassium transmembrane transporter activity"/>
    <property type="evidence" value="ECO:0007669"/>
    <property type="project" value="InterPro"/>
</dbReference>
<dbReference type="HAMAP" id="MF_00276">
    <property type="entry name" value="KdpC"/>
    <property type="match status" value="1"/>
</dbReference>
<dbReference type="InterPro" id="IPR003820">
    <property type="entry name" value="KdpC"/>
</dbReference>
<dbReference type="NCBIfam" id="TIGR00681">
    <property type="entry name" value="kdpC"/>
    <property type="match status" value="1"/>
</dbReference>
<dbReference type="NCBIfam" id="NF001454">
    <property type="entry name" value="PRK00315.1"/>
    <property type="match status" value="1"/>
</dbReference>
<dbReference type="NCBIfam" id="NF010603">
    <property type="entry name" value="PRK13999.1"/>
    <property type="match status" value="1"/>
</dbReference>
<dbReference type="PANTHER" id="PTHR30042">
    <property type="entry name" value="POTASSIUM-TRANSPORTING ATPASE C CHAIN"/>
    <property type="match status" value="1"/>
</dbReference>
<dbReference type="PANTHER" id="PTHR30042:SF2">
    <property type="entry name" value="POTASSIUM-TRANSPORTING ATPASE KDPC SUBUNIT"/>
    <property type="match status" value="1"/>
</dbReference>
<dbReference type="Pfam" id="PF02669">
    <property type="entry name" value="KdpC"/>
    <property type="match status" value="1"/>
</dbReference>
<dbReference type="PIRSF" id="PIRSF001296">
    <property type="entry name" value="K_ATPase_KdpC"/>
    <property type="match status" value="1"/>
</dbReference>
<proteinExistence type="inferred from homology"/>
<comment type="function">
    <text evidence="1">Part of the high-affinity ATP-driven potassium transport (or Kdp) system, which catalyzes the hydrolysis of ATP coupled with the electrogenic transport of potassium into the cytoplasm. This subunit acts as a catalytic chaperone that increases the ATP-binding affinity of the ATP-hydrolyzing subunit KdpB by the formation of a transient KdpB/KdpC/ATP ternary complex.</text>
</comment>
<comment type="subunit">
    <text evidence="1">The system is composed of three essential subunits: KdpA, KdpB and KdpC.</text>
</comment>
<comment type="subcellular location">
    <subcellularLocation>
        <location evidence="1">Cell inner membrane</location>
        <topology evidence="1">Single-pass membrane protein</topology>
    </subcellularLocation>
</comment>
<comment type="similarity">
    <text evidence="1">Belongs to the KdpC family.</text>
</comment>
<name>KDPC_METEP</name>
<evidence type="ECO:0000255" key="1">
    <source>
        <dbReference type="HAMAP-Rule" id="MF_00276"/>
    </source>
</evidence>
<gene>
    <name evidence="1" type="primary">kdpC</name>
    <name type="ordered locus">Mext_0235</name>
</gene>